<name>HSP76_HUMAN</name>
<gene>
    <name type="primary">HSPA6</name>
    <name type="synonym">HSP70B'</name>
</gene>
<keyword id="KW-0002">3D-structure</keyword>
<keyword id="KW-0067">ATP-binding</keyword>
<keyword id="KW-0488">Methylation</keyword>
<keyword id="KW-0547">Nucleotide-binding</keyword>
<keyword id="KW-1267">Proteomics identification</keyword>
<keyword id="KW-1185">Reference proteome</keyword>
<keyword id="KW-0346">Stress response</keyword>
<evidence type="ECO:0000250" key="1">
    <source>
        <dbReference type="UniProtKB" id="P11142"/>
    </source>
</evidence>
<evidence type="ECO:0000256" key="2">
    <source>
        <dbReference type="SAM" id="MobiDB-lite"/>
    </source>
</evidence>
<evidence type="ECO:0000269" key="3">
    <source>
    </source>
</evidence>
<evidence type="ECO:0000269" key="4">
    <source ref="2"/>
</evidence>
<evidence type="ECO:0000303" key="5">
    <source>
    </source>
</evidence>
<evidence type="ECO:0000305" key="6"/>
<evidence type="ECO:0000305" key="7">
    <source>
    </source>
</evidence>
<evidence type="ECO:0007829" key="8">
    <source>
        <dbReference type="PDB" id="3FE1"/>
    </source>
</evidence>
<sequence>MQAPRELAVGIDLGTTYSCVGVFQQGRVEILANDQGNRTTPSYVAFTDTERLVGDAAKSQAALNPHNTVFDAKRLIGRKFADTTVQSDMKHWPFRVVSEGGKPKVRVCYRGEDKTFYPEEISSMVLSKMKETAEAYLGQPVKHAVITVPAYFNDSQRQATKDAGAIAGLNVLRIINEPTAAAIAYGLDRRGAGERNVLIFDLGGGTFDVSVLSIDAGVFEVKATAGDTHLGGEDFDNRLVNHFMEEFRRKHGKDLSGNKRALRRLRTACERAKRTLSSSTQATLEIDSLFEGVDFYTSITRARFEELCSDLFRSTLEPVEKALRDAKLDKAQIHDVVLVGGSTRIPKVQKLLQDFFNGKELNKSINPDEAVAYGAAVQAAVLMGDKCEKVQDLLLLDVAPLSLGLETAGGVMTTLIQRNATIPTKQTQTFTTYSDNQPGVFIQVYEGERAMTKDNNLLGRFELSGIPPAPRGVPQIEVTFDIDANGILSVTATDRSTGKANKITITNDKGRLSKEEVERMVHEAEQYKAEDEAQRDRVAAKNSLEAHVFHVKGSLQEESLRDKIPEEDRRKMQDKCREVLAWLEHNQLAEKEEYEHQKRELEQICRPIFSRLYGGPGVPGGSSCGTQARQGDPSTGPIIEEVD</sequence>
<protein>
    <recommendedName>
        <fullName>Heat shock 70 kDa protein 6</fullName>
    </recommendedName>
    <alternativeName>
        <fullName>Heat shock 70 kDa protein B'</fullName>
    </alternativeName>
    <alternativeName>
        <fullName>Heat shock protein family A member 6</fullName>
    </alternativeName>
</protein>
<reference key="1">
    <citation type="journal article" date="1990" name="Biochem. J.">
        <title>The human heat-shock protein family. Expression of a novel heat-inducible HSP70 (HSP70B') and isolation of its cDNA and genomic DNA.</title>
        <authorList>
            <person name="Leung T.K.C."/>
            <person name="Rajendran M.Y."/>
            <person name="Monfries C."/>
            <person name="Hall C."/>
            <person name="Lim L."/>
        </authorList>
    </citation>
    <scope>NUCLEOTIDE SEQUENCE [GENOMIC DNA / MRNA]</scope>
    <source>
        <tissue>Lung</tissue>
    </source>
</reference>
<reference key="2">
    <citation type="submission" date="2006-05" db="EMBL/GenBank/DDBJ databases">
        <authorList>
            <consortium name="NIEHS SNPs program"/>
        </authorList>
    </citation>
    <scope>NUCLEOTIDE SEQUENCE [GENOMIC DNA]</scope>
    <scope>VARIANTS THR-65; GLN-95; THR-150; SER-153; ASN-154; VAL-159; LYS-170; PRO-173; ALA-178; LYS-194; PHE-198; LYS-297; ILE-464; HIS-471; GLU-528; GLU-562; GLN-577 AND ALA-626</scope>
</reference>
<reference key="3">
    <citation type="journal article" date="2006" name="Nature">
        <title>The DNA sequence and biological annotation of human chromosome 1.</title>
        <authorList>
            <person name="Gregory S.G."/>
            <person name="Barlow K.F."/>
            <person name="McLay K.E."/>
            <person name="Kaul R."/>
            <person name="Swarbreck D."/>
            <person name="Dunham A."/>
            <person name="Scott C.E."/>
            <person name="Howe K.L."/>
            <person name="Woodfine K."/>
            <person name="Spencer C.C.A."/>
            <person name="Jones M.C."/>
            <person name="Gillson C."/>
            <person name="Searle S."/>
            <person name="Zhou Y."/>
            <person name="Kokocinski F."/>
            <person name="McDonald L."/>
            <person name="Evans R."/>
            <person name="Phillips K."/>
            <person name="Atkinson A."/>
            <person name="Cooper R."/>
            <person name="Jones C."/>
            <person name="Hall R.E."/>
            <person name="Andrews T.D."/>
            <person name="Lloyd C."/>
            <person name="Ainscough R."/>
            <person name="Almeida J.P."/>
            <person name="Ambrose K.D."/>
            <person name="Anderson F."/>
            <person name="Andrew R.W."/>
            <person name="Ashwell R.I.S."/>
            <person name="Aubin K."/>
            <person name="Babbage A.K."/>
            <person name="Bagguley C.L."/>
            <person name="Bailey J."/>
            <person name="Beasley H."/>
            <person name="Bethel G."/>
            <person name="Bird C.P."/>
            <person name="Bray-Allen S."/>
            <person name="Brown J.Y."/>
            <person name="Brown A.J."/>
            <person name="Buckley D."/>
            <person name="Burton J."/>
            <person name="Bye J."/>
            <person name="Carder C."/>
            <person name="Chapman J.C."/>
            <person name="Clark S.Y."/>
            <person name="Clarke G."/>
            <person name="Clee C."/>
            <person name="Cobley V."/>
            <person name="Collier R.E."/>
            <person name="Corby N."/>
            <person name="Coville G.J."/>
            <person name="Davies J."/>
            <person name="Deadman R."/>
            <person name="Dunn M."/>
            <person name="Earthrowl M."/>
            <person name="Ellington A.G."/>
            <person name="Errington H."/>
            <person name="Frankish A."/>
            <person name="Frankland J."/>
            <person name="French L."/>
            <person name="Garner P."/>
            <person name="Garnett J."/>
            <person name="Gay L."/>
            <person name="Ghori M.R.J."/>
            <person name="Gibson R."/>
            <person name="Gilby L.M."/>
            <person name="Gillett W."/>
            <person name="Glithero R.J."/>
            <person name="Grafham D.V."/>
            <person name="Griffiths C."/>
            <person name="Griffiths-Jones S."/>
            <person name="Grocock R."/>
            <person name="Hammond S."/>
            <person name="Harrison E.S.I."/>
            <person name="Hart E."/>
            <person name="Haugen E."/>
            <person name="Heath P.D."/>
            <person name="Holmes S."/>
            <person name="Holt K."/>
            <person name="Howden P.J."/>
            <person name="Hunt A.R."/>
            <person name="Hunt S.E."/>
            <person name="Hunter G."/>
            <person name="Isherwood J."/>
            <person name="James R."/>
            <person name="Johnson C."/>
            <person name="Johnson D."/>
            <person name="Joy A."/>
            <person name="Kay M."/>
            <person name="Kershaw J.K."/>
            <person name="Kibukawa M."/>
            <person name="Kimberley A.M."/>
            <person name="King A."/>
            <person name="Knights A.J."/>
            <person name="Lad H."/>
            <person name="Laird G."/>
            <person name="Lawlor S."/>
            <person name="Leongamornlert D.A."/>
            <person name="Lloyd D.M."/>
            <person name="Loveland J."/>
            <person name="Lovell J."/>
            <person name="Lush M.J."/>
            <person name="Lyne R."/>
            <person name="Martin S."/>
            <person name="Mashreghi-Mohammadi M."/>
            <person name="Matthews L."/>
            <person name="Matthews N.S.W."/>
            <person name="McLaren S."/>
            <person name="Milne S."/>
            <person name="Mistry S."/>
            <person name="Moore M.J.F."/>
            <person name="Nickerson T."/>
            <person name="O'Dell C.N."/>
            <person name="Oliver K."/>
            <person name="Palmeiri A."/>
            <person name="Palmer S.A."/>
            <person name="Parker A."/>
            <person name="Patel D."/>
            <person name="Pearce A.V."/>
            <person name="Peck A.I."/>
            <person name="Pelan S."/>
            <person name="Phelps K."/>
            <person name="Phillimore B.J."/>
            <person name="Plumb R."/>
            <person name="Rajan J."/>
            <person name="Raymond C."/>
            <person name="Rouse G."/>
            <person name="Saenphimmachak C."/>
            <person name="Sehra H.K."/>
            <person name="Sheridan E."/>
            <person name="Shownkeen R."/>
            <person name="Sims S."/>
            <person name="Skuce C.D."/>
            <person name="Smith M."/>
            <person name="Steward C."/>
            <person name="Subramanian S."/>
            <person name="Sycamore N."/>
            <person name="Tracey A."/>
            <person name="Tromans A."/>
            <person name="Van Helmond Z."/>
            <person name="Wall M."/>
            <person name="Wallis J.M."/>
            <person name="White S."/>
            <person name="Whitehead S.L."/>
            <person name="Wilkinson J.E."/>
            <person name="Willey D.L."/>
            <person name="Williams H."/>
            <person name="Wilming L."/>
            <person name="Wray P.W."/>
            <person name="Wu Z."/>
            <person name="Coulson A."/>
            <person name="Vaudin M."/>
            <person name="Sulston J.E."/>
            <person name="Durbin R.M."/>
            <person name="Hubbard T."/>
            <person name="Wooster R."/>
            <person name="Dunham I."/>
            <person name="Carter N.P."/>
            <person name="McVean G."/>
            <person name="Ross M.T."/>
            <person name="Harrow J."/>
            <person name="Olson M.V."/>
            <person name="Beck S."/>
            <person name="Rogers J."/>
            <person name="Bentley D.R."/>
        </authorList>
    </citation>
    <scope>NUCLEOTIDE SEQUENCE [LARGE SCALE GENOMIC DNA]</scope>
</reference>
<reference key="4">
    <citation type="journal article" date="2004" name="Genome Res.">
        <title>The status, quality, and expansion of the NIH full-length cDNA project: the Mammalian Gene Collection (MGC).</title>
        <authorList>
            <consortium name="The MGC Project Team"/>
        </authorList>
    </citation>
    <scope>NUCLEOTIDE SEQUENCE [LARGE SCALE MRNA]</scope>
    <source>
        <tissue>Ovary</tissue>
        <tissue>Skin</tissue>
    </source>
</reference>
<reference key="5">
    <citation type="journal article" date="1992" name="Genomics">
        <title>The human heat-shock genes HSPA6 and HSPA7 are both expressed and localize to chromosome 1.</title>
        <authorList>
            <person name="Leung T.K.C."/>
            <person name="Hall C."/>
            <person name="Rajendran M."/>
            <person name="Spurr N.K."/>
            <person name="Lim L."/>
        </authorList>
    </citation>
    <scope>NUCLEOTIDE SEQUENCE [GENOMIC DNA] OF 1-250</scope>
</reference>
<reference key="6">
    <citation type="journal article" date="1988" name="J. Mol. Biol.">
        <title>Cis-acting elements involved in the regulated expression of a human HSP70 gene.</title>
        <authorList>
            <person name="Schiller P."/>
            <person name="Amin J."/>
            <person name="Ananthan J."/>
            <person name="Brown M.E."/>
            <person name="Scott W.A."/>
            <person name="Voellmy R."/>
        </authorList>
    </citation>
    <scope>NUCLEOTIDE SEQUENCE [GENOMIC DNA] OF 1-6</scope>
</reference>
<reference key="7">
    <citation type="journal article" date="2013" name="J. Biol. Chem.">
        <title>Identification and characterization of a novel human methyltransferase modulating Hsp70 function through lysine methylation.</title>
        <authorList>
            <person name="Jakobsson M.E."/>
            <person name="Moen A."/>
            <person name="Bousset L."/>
            <person name="Egge-Jacobsen W."/>
            <person name="Kernstock S."/>
            <person name="Melki R."/>
            <person name="Falnes P.O."/>
        </authorList>
    </citation>
    <scope>METHYLATION AT LYS-563</scope>
    <scope>MUTAGENESIS OF LYS-563</scope>
</reference>
<reference key="8">
    <citation type="journal article" date="2016" name="Cell Stress Chaperones">
        <title>The human HSP70 family of chaperones: where do we stand?</title>
        <authorList>
            <person name="Radons J."/>
        </authorList>
    </citation>
    <scope>REVIEW</scope>
</reference>
<reference key="9">
    <citation type="journal article" date="2010" name="PLoS ONE">
        <title>Crystal structures of the ATPase domains of four human Hsp70 isoforms: HSPA1L/Hsp70-hom, HSPA2/Hsp70-2, HSPA6/Hsp70B', and HSPA5/BiP/GRP78.</title>
        <authorList>
            <person name="Wisniewska M."/>
            <person name="Karlberg T."/>
            <person name="Lehtio L."/>
            <person name="Johansson I."/>
            <person name="Kotenyova T."/>
            <person name="Moche M."/>
            <person name="Schuler H."/>
        </authorList>
    </citation>
    <scope>X-RAY CRYSTALLOGRAPHY (2.20 ANGSTROMS) OF 6-385 IN COMPLEX WITH ADP AND PHOSPHATE</scope>
</reference>
<comment type="function">
    <text evidence="5">Molecular chaperone implicated in a wide variety of cellular processes, including protection of the proteome from stress, folding and transport of newly synthesized polypeptides, activation of proteolysis of misfolded proteins and the formation and dissociation of protein complexes. Plays a pivotal role in the protein quality control system, ensuring the correct folding of proteins, the re-folding of misfolded proteins and controlling the targeting of proteins for subsequent degradation. This is achieved through cycles of ATP binding, ATP hydrolysis and ADP release, mediated by co-chaperones. The affinity for polypeptides is regulated by its nucleotide bound state. In the ATP-bound form, it has a low affinity for substrate proteins. However, upon hydrolysis of the ATP to ADP, it undergoes a conformational change that increases its affinity for substrate proteins. It goes through repeated cycles of ATP hydrolysis and nucleotide exchange, which permits cycles of substrate binding and release (PubMed:26865365).</text>
</comment>
<comment type="interaction">
    <interactant intactId="EBI-355106">
        <id>P17066</id>
    </interactant>
    <interactant intactId="EBI-2371423">
        <id>O43865</id>
        <label>AHCYL1</label>
    </interactant>
    <organismsDiffer>false</organismsDiffer>
    <experiments>3</experiments>
</comment>
<comment type="interaction">
    <interactant intactId="EBI-355106">
        <id>P17066</id>
    </interactant>
    <interactant intactId="EBI-2949658">
        <id>O95429</id>
        <label>BAG4</label>
    </interactant>
    <organismsDiffer>false</organismsDiffer>
    <experiments>3</experiments>
</comment>
<comment type="interaction">
    <interactant intactId="EBI-355106">
        <id>P17066</id>
    </interactant>
    <interactant intactId="EBI-12030460">
        <id>Q8WYQ4-2</id>
        <label>C22orf15</label>
    </interactant>
    <organismsDiffer>false</organismsDiffer>
    <experiments>3</experiments>
</comment>
<comment type="interaction">
    <interactant intactId="EBI-355106">
        <id>P17066</id>
    </interactant>
    <interactant intactId="EBI-1550081">
        <id>Q7Z4G1</id>
        <label>COMMD6</label>
    </interactant>
    <organismsDiffer>false</organismsDiffer>
    <experiments>3</experiments>
</comment>
<comment type="interaction">
    <interactant intactId="EBI-355106">
        <id>P17066</id>
    </interactant>
    <interactant intactId="EBI-9641086">
        <id>P21333-2</id>
        <label>FLNA</label>
    </interactant>
    <organismsDiffer>false</organismsDiffer>
    <experiments>3</experiments>
</comment>
<comment type="interaction">
    <interactant intactId="EBI-355106">
        <id>P17066</id>
    </interactant>
    <interactant intactId="EBI-8473062">
        <id>Q8N1A0</id>
        <label>KRT222</label>
    </interactant>
    <organismsDiffer>false</organismsDiffer>
    <experiments>3</experiments>
</comment>
<comment type="interaction">
    <interactant intactId="EBI-355106">
        <id>P17066</id>
    </interactant>
    <interactant intactId="EBI-357504">
        <id>P47929</id>
        <label>LGALS7B</label>
    </interactant>
    <organismsDiffer>false</organismsDiffer>
    <experiments>3</experiments>
</comment>
<comment type="interaction">
    <interactant intactId="EBI-355106">
        <id>P17066</id>
    </interactant>
    <interactant intactId="EBI-359252">
        <id>P23284</id>
        <label>PPIB</label>
    </interactant>
    <organismsDiffer>false</organismsDiffer>
    <experiments>3</experiments>
</comment>
<comment type="interaction">
    <interactant intactId="EBI-355106">
        <id>P17066</id>
    </interactant>
    <interactant intactId="EBI-2116102">
        <id>Q96NZ9</id>
        <label>PRAP1</label>
    </interactant>
    <organismsDiffer>false</organismsDiffer>
    <experiments>3</experiments>
</comment>
<comment type="interaction">
    <interactant intactId="EBI-355106">
        <id>P17066</id>
    </interactant>
    <interactant intactId="EBI-621389">
        <id>P27694</id>
        <label>RPA1</label>
    </interactant>
    <organismsDiffer>false</organismsDiffer>
    <experiments>3</experiments>
</comment>
<comment type="interaction">
    <interactant intactId="EBI-355106">
        <id>P17066</id>
    </interactant>
    <interactant intactId="EBI-710997">
        <id>P54274</id>
        <label>TERF1</label>
    </interactant>
    <organismsDiffer>false</organismsDiffer>
    <experiments>2</experiments>
</comment>
<comment type="induction">
    <text>Only at higher temperatures, and no basal expression.</text>
</comment>
<comment type="domain">
    <text evidence="7">The N-terminal nucleotide binding domain (NBD) (also known as the ATPase domain) is responsible for binding and hydrolyzing ATP. The C-terminal substrate-binding domain (SBD) (also known as peptide-binding domain) binds to the client/substrate proteins. The two domains are allosterically coupled so that, when ATP is bound to the NBD, the SBD binds relatively weakly to clients. When ADP is bound in the NBD, a conformational change enhances the affinity of the SBD for client proteins.</text>
</comment>
<comment type="similarity">
    <text evidence="6">Belongs to the heat shock protein 70 family.</text>
</comment>
<organism>
    <name type="scientific">Homo sapiens</name>
    <name type="common">Human</name>
    <dbReference type="NCBI Taxonomy" id="9606"/>
    <lineage>
        <taxon>Eukaryota</taxon>
        <taxon>Metazoa</taxon>
        <taxon>Chordata</taxon>
        <taxon>Craniata</taxon>
        <taxon>Vertebrata</taxon>
        <taxon>Euteleostomi</taxon>
        <taxon>Mammalia</taxon>
        <taxon>Eutheria</taxon>
        <taxon>Euarchontoglires</taxon>
        <taxon>Primates</taxon>
        <taxon>Haplorrhini</taxon>
        <taxon>Catarrhini</taxon>
        <taxon>Hominidae</taxon>
        <taxon>Homo</taxon>
    </lineage>
</organism>
<proteinExistence type="evidence at protein level"/>
<dbReference type="EMBL" id="X51757">
    <property type="protein sequence ID" value="CAA36061.1"/>
    <property type="molecule type" value="Genomic_DNA"/>
</dbReference>
<dbReference type="EMBL" id="X51758">
    <property type="protein sequence ID" value="CAA36062.1"/>
    <property type="molecule type" value="mRNA"/>
</dbReference>
<dbReference type="EMBL" id="DQ521571">
    <property type="protein sequence ID" value="ABF47108.1"/>
    <property type="molecule type" value="Genomic_DNA"/>
</dbReference>
<dbReference type="EMBL" id="AL590385">
    <property type="status" value="NOT_ANNOTATED_CDS"/>
    <property type="molecule type" value="Genomic_DNA"/>
</dbReference>
<dbReference type="EMBL" id="BC004279">
    <property type="protein sequence ID" value="AAH04279.1"/>
    <property type="molecule type" value="mRNA"/>
</dbReference>
<dbReference type="EMBL" id="BC035665">
    <property type="protein sequence ID" value="AAH35665.1"/>
    <property type="molecule type" value="mRNA"/>
</dbReference>
<dbReference type="EMBL" id="S78631">
    <property type="status" value="NOT_ANNOTATED_CDS"/>
    <property type="molecule type" value="Genomic_DNA"/>
</dbReference>
<dbReference type="CCDS" id="CCDS1231.1"/>
<dbReference type="PIR" id="S09036">
    <property type="entry name" value="S09036"/>
</dbReference>
<dbReference type="RefSeq" id="NP_002146.2">
    <property type="nucleotide sequence ID" value="NM_002155.4"/>
</dbReference>
<dbReference type="PDB" id="3FE1">
    <property type="method" value="X-ray"/>
    <property type="resolution" value="2.20 A"/>
    <property type="chains" value="A/B/C=6-385"/>
</dbReference>
<dbReference type="PDBsum" id="3FE1"/>
<dbReference type="SMR" id="P17066"/>
<dbReference type="BioGRID" id="109542">
    <property type="interactions" value="398"/>
</dbReference>
<dbReference type="FunCoup" id="P17066">
    <property type="interactions" value="1186"/>
</dbReference>
<dbReference type="IntAct" id="P17066">
    <property type="interactions" value="151"/>
</dbReference>
<dbReference type="MINT" id="P17066"/>
<dbReference type="STRING" id="9606.ENSP00000310219"/>
<dbReference type="BindingDB" id="P17066"/>
<dbReference type="ChEMBL" id="CHEMBL3232688"/>
<dbReference type="GlyConnect" id="1298">
    <property type="glycosylation" value="1 N-Linked glycan (1 site)"/>
</dbReference>
<dbReference type="GlyGen" id="P17066">
    <property type="glycosylation" value="4 sites, 1 N-linked glycan (1 site), 1 O-linked glycan (3 sites)"/>
</dbReference>
<dbReference type="iPTMnet" id="P17066"/>
<dbReference type="PhosphoSitePlus" id="P17066"/>
<dbReference type="SwissPalm" id="P17066"/>
<dbReference type="BioMuta" id="HSPA6"/>
<dbReference type="DMDM" id="34978357"/>
<dbReference type="jPOST" id="P17066"/>
<dbReference type="MassIVE" id="P17066"/>
<dbReference type="PaxDb" id="9606-ENSP00000310219"/>
<dbReference type="PeptideAtlas" id="P17066"/>
<dbReference type="PRIDE" id="P17066"/>
<dbReference type="ProteomicsDB" id="53451"/>
<dbReference type="Pumba" id="P17066"/>
<dbReference type="Antibodypedia" id="34311">
    <property type="antibodies" value="332 antibodies from 31 providers"/>
</dbReference>
<dbReference type="DNASU" id="3310"/>
<dbReference type="Ensembl" id="ENST00000309758.6">
    <property type="protein sequence ID" value="ENSP00000310219.4"/>
    <property type="gene ID" value="ENSG00000173110.8"/>
</dbReference>
<dbReference type="GeneID" id="3310"/>
<dbReference type="KEGG" id="hsa:3310"/>
<dbReference type="MANE-Select" id="ENST00000309758.6">
    <property type="protein sequence ID" value="ENSP00000310219.4"/>
    <property type="RefSeq nucleotide sequence ID" value="NM_002155.5"/>
    <property type="RefSeq protein sequence ID" value="NP_002146.2"/>
</dbReference>
<dbReference type="UCSC" id="uc001gaq.4">
    <property type="organism name" value="human"/>
</dbReference>
<dbReference type="AGR" id="HGNC:5239"/>
<dbReference type="CTD" id="3310"/>
<dbReference type="DisGeNET" id="3310"/>
<dbReference type="GeneCards" id="HSPA6"/>
<dbReference type="HGNC" id="HGNC:5239">
    <property type="gene designation" value="HSPA6"/>
</dbReference>
<dbReference type="HPA" id="ENSG00000173110">
    <property type="expression patterns" value="Tissue enhanced (lung)"/>
</dbReference>
<dbReference type="MIM" id="140555">
    <property type="type" value="gene"/>
</dbReference>
<dbReference type="neXtProt" id="NX_P17066"/>
<dbReference type="OpenTargets" id="ENSG00000173110"/>
<dbReference type="PharmGKB" id="PA29505"/>
<dbReference type="VEuPathDB" id="HostDB:ENSG00000173110"/>
<dbReference type="eggNOG" id="KOG0101">
    <property type="taxonomic scope" value="Eukaryota"/>
</dbReference>
<dbReference type="GeneTree" id="ENSGT00940000163722"/>
<dbReference type="HOGENOM" id="CLU_005965_2_1_1"/>
<dbReference type="InParanoid" id="P17066"/>
<dbReference type="OMA" id="GCFELSG"/>
<dbReference type="OrthoDB" id="2401965at2759"/>
<dbReference type="PAN-GO" id="P17066">
    <property type="GO annotations" value="15 GO annotations based on evolutionary models"/>
</dbReference>
<dbReference type="PhylomeDB" id="P17066"/>
<dbReference type="TreeFam" id="TF105042"/>
<dbReference type="PathwayCommons" id="P17066"/>
<dbReference type="Reactome" id="R-HSA-3371453">
    <property type="pathway name" value="Regulation of HSF1-mediated heat shock response"/>
</dbReference>
<dbReference type="Reactome" id="R-HSA-6798695">
    <property type="pathway name" value="Neutrophil degranulation"/>
</dbReference>
<dbReference type="SignaLink" id="P17066"/>
<dbReference type="SIGNOR" id="P17066"/>
<dbReference type="BioGRID-ORCS" id="3310">
    <property type="hits" value="19 hits in 1120 CRISPR screens"/>
</dbReference>
<dbReference type="CD-CODE" id="804901D1">
    <property type="entry name" value="Nuclear speckle"/>
</dbReference>
<dbReference type="CD-CODE" id="91857CE7">
    <property type="entry name" value="Nucleolus"/>
</dbReference>
<dbReference type="CD-CODE" id="BEB5E62D">
    <property type="entry name" value="Anisosome"/>
</dbReference>
<dbReference type="CD-CODE" id="FB4E32DD">
    <property type="entry name" value="Presynaptic clusters and postsynaptic densities"/>
</dbReference>
<dbReference type="EvolutionaryTrace" id="P17066"/>
<dbReference type="GeneWiki" id="HSPA6"/>
<dbReference type="GenomeRNAi" id="3310"/>
<dbReference type="Pharos" id="P17066">
    <property type="development level" value="Tbio"/>
</dbReference>
<dbReference type="PRO" id="PR:P17066"/>
<dbReference type="Proteomes" id="UP000005640">
    <property type="component" value="Chromosome 1"/>
</dbReference>
<dbReference type="RNAct" id="P17066">
    <property type="molecule type" value="protein"/>
</dbReference>
<dbReference type="Bgee" id="ENSG00000173110">
    <property type="expression patterns" value="Expressed in blood and 95 other cell types or tissues"/>
</dbReference>
<dbReference type="ExpressionAtlas" id="P17066">
    <property type="expression patterns" value="baseline and differential"/>
</dbReference>
<dbReference type="GO" id="GO:0072562">
    <property type="term" value="C:blood microparticle"/>
    <property type="evidence" value="ECO:0007005"/>
    <property type="project" value="UniProtKB"/>
</dbReference>
<dbReference type="GO" id="GO:0005814">
    <property type="term" value="C:centriole"/>
    <property type="evidence" value="ECO:0000314"/>
    <property type="project" value="UniProtKB"/>
</dbReference>
<dbReference type="GO" id="GO:0005737">
    <property type="term" value="C:cytoplasm"/>
    <property type="evidence" value="ECO:0000314"/>
    <property type="project" value="UniProtKB"/>
</dbReference>
<dbReference type="GO" id="GO:0005829">
    <property type="term" value="C:cytosol"/>
    <property type="evidence" value="ECO:0000314"/>
    <property type="project" value="UniProtKB"/>
</dbReference>
<dbReference type="GO" id="GO:0070062">
    <property type="term" value="C:extracellular exosome"/>
    <property type="evidence" value="ECO:0007005"/>
    <property type="project" value="UniProtKB"/>
</dbReference>
<dbReference type="GO" id="GO:0005576">
    <property type="term" value="C:extracellular region"/>
    <property type="evidence" value="ECO:0000304"/>
    <property type="project" value="Reactome"/>
</dbReference>
<dbReference type="GO" id="GO:1904813">
    <property type="term" value="C:ficolin-1-rich granule lumen"/>
    <property type="evidence" value="ECO:0000304"/>
    <property type="project" value="Reactome"/>
</dbReference>
<dbReference type="GO" id="GO:0005634">
    <property type="term" value="C:nucleus"/>
    <property type="evidence" value="ECO:0000318"/>
    <property type="project" value="GO_Central"/>
</dbReference>
<dbReference type="GO" id="GO:0005886">
    <property type="term" value="C:plasma membrane"/>
    <property type="evidence" value="ECO:0000318"/>
    <property type="project" value="GO_Central"/>
</dbReference>
<dbReference type="GO" id="GO:0034774">
    <property type="term" value="C:secretory granule lumen"/>
    <property type="evidence" value="ECO:0000304"/>
    <property type="project" value="Reactome"/>
</dbReference>
<dbReference type="GO" id="GO:0005524">
    <property type="term" value="F:ATP binding"/>
    <property type="evidence" value="ECO:0007669"/>
    <property type="project" value="UniProtKB-KW"/>
</dbReference>
<dbReference type="GO" id="GO:0016887">
    <property type="term" value="F:ATP hydrolysis activity"/>
    <property type="evidence" value="ECO:0000314"/>
    <property type="project" value="UniProtKB"/>
</dbReference>
<dbReference type="GO" id="GO:0140662">
    <property type="term" value="F:ATP-dependent protein folding chaperone"/>
    <property type="evidence" value="ECO:0007669"/>
    <property type="project" value="InterPro"/>
</dbReference>
<dbReference type="GO" id="GO:0019899">
    <property type="term" value="F:enzyme binding"/>
    <property type="evidence" value="ECO:0000353"/>
    <property type="project" value="BHF-UCL"/>
</dbReference>
<dbReference type="GO" id="GO:0031072">
    <property type="term" value="F:heat shock protein binding"/>
    <property type="evidence" value="ECO:0000353"/>
    <property type="project" value="UniProtKB"/>
</dbReference>
<dbReference type="GO" id="GO:0044183">
    <property type="term" value="F:protein folding chaperone"/>
    <property type="evidence" value="ECO:0000318"/>
    <property type="project" value="GO_Central"/>
</dbReference>
<dbReference type="GO" id="GO:0051082">
    <property type="term" value="F:unfolded protein binding"/>
    <property type="evidence" value="ECO:0000314"/>
    <property type="project" value="UniProtKB"/>
</dbReference>
<dbReference type="GO" id="GO:0034605">
    <property type="term" value="P:cellular response to heat"/>
    <property type="evidence" value="ECO:0000314"/>
    <property type="project" value="UniProtKB"/>
</dbReference>
<dbReference type="GO" id="GO:0051085">
    <property type="term" value="P:chaperone cofactor-dependent protein refolding"/>
    <property type="evidence" value="ECO:0000318"/>
    <property type="project" value="GO_Central"/>
</dbReference>
<dbReference type="GO" id="GO:0042026">
    <property type="term" value="P:protein refolding"/>
    <property type="evidence" value="ECO:0000314"/>
    <property type="project" value="UniProtKB"/>
</dbReference>
<dbReference type="GO" id="GO:0006986">
    <property type="term" value="P:response to unfolded protein"/>
    <property type="evidence" value="ECO:0000304"/>
    <property type="project" value="ProtInc"/>
</dbReference>
<dbReference type="CDD" id="cd10233">
    <property type="entry name" value="ASKHA_NBD_HSP70_HSPA1"/>
    <property type="match status" value="1"/>
</dbReference>
<dbReference type="FunFam" id="2.60.34.10:FF:000002">
    <property type="entry name" value="Heat shock 70 kDa"/>
    <property type="match status" value="1"/>
</dbReference>
<dbReference type="FunFam" id="3.30.420.40:FF:000172">
    <property type="entry name" value="Heat shock 70 kDa protein"/>
    <property type="match status" value="1"/>
</dbReference>
<dbReference type="FunFam" id="3.90.640.10:FF:000058">
    <property type="entry name" value="Heat shock 70 kDa protein"/>
    <property type="match status" value="1"/>
</dbReference>
<dbReference type="FunFam" id="1.20.1270.10:FF:000033">
    <property type="entry name" value="heat shock 70 kDa protein 6"/>
    <property type="match status" value="1"/>
</dbReference>
<dbReference type="FunFam" id="3.30.30.30:FF:000001">
    <property type="entry name" value="heat shock 70 kDa protein-like"/>
    <property type="match status" value="1"/>
</dbReference>
<dbReference type="FunFam" id="3.30.420.40:FF:000135">
    <property type="entry name" value="Heat shock cognate 71 kDa protein"/>
    <property type="match status" value="1"/>
</dbReference>
<dbReference type="FunFam" id="3.30.420.40:FF:000026">
    <property type="entry name" value="Heat shock protein 70"/>
    <property type="match status" value="1"/>
</dbReference>
<dbReference type="Gene3D" id="1.20.1270.10">
    <property type="match status" value="1"/>
</dbReference>
<dbReference type="Gene3D" id="3.30.30.30">
    <property type="match status" value="1"/>
</dbReference>
<dbReference type="Gene3D" id="3.30.420.40">
    <property type="match status" value="2"/>
</dbReference>
<dbReference type="Gene3D" id="3.90.640.10">
    <property type="entry name" value="Actin, Chain A, domain 4"/>
    <property type="match status" value="1"/>
</dbReference>
<dbReference type="Gene3D" id="2.60.34.10">
    <property type="entry name" value="Substrate Binding Domain Of DNAk, Chain A, domain 1"/>
    <property type="match status" value="1"/>
</dbReference>
<dbReference type="InterPro" id="IPR043129">
    <property type="entry name" value="ATPase_NBD"/>
</dbReference>
<dbReference type="InterPro" id="IPR018181">
    <property type="entry name" value="Heat_shock_70_CS"/>
</dbReference>
<dbReference type="InterPro" id="IPR029048">
    <property type="entry name" value="HSP70_C_sf"/>
</dbReference>
<dbReference type="InterPro" id="IPR029047">
    <property type="entry name" value="HSP70_peptide-bd_sf"/>
</dbReference>
<dbReference type="InterPro" id="IPR013126">
    <property type="entry name" value="Hsp_70_fam"/>
</dbReference>
<dbReference type="NCBIfam" id="NF001413">
    <property type="entry name" value="PRK00290.1"/>
    <property type="match status" value="1"/>
</dbReference>
<dbReference type="PANTHER" id="PTHR19375">
    <property type="entry name" value="HEAT SHOCK PROTEIN 70KDA"/>
    <property type="match status" value="1"/>
</dbReference>
<dbReference type="Pfam" id="PF00012">
    <property type="entry name" value="HSP70"/>
    <property type="match status" value="1"/>
</dbReference>
<dbReference type="PRINTS" id="PR00301">
    <property type="entry name" value="HEATSHOCK70"/>
</dbReference>
<dbReference type="SUPFAM" id="SSF53067">
    <property type="entry name" value="Actin-like ATPase domain"/>
    <property type="match status" value="2"/>
</dbReference>
<dbReference type="SUPFAM" id="SSF100934">
    <property type="entry name" value="Heat shock protein 70kD (HSP70), C-terminal subdomain"/>
    <property type="match status" value="1"/>
</dbReference>
<dbReference type="SUPFAM" id="SSF100920">
    <property type="entry name" value="Heat shock protein 70kD (HSP70), peptide-binding domain"/>
    <property type="match status" value="1"/>
</dbReference>
<dbReference type="PROSITE" id="PS00297">
    <property type="entry name" value="HSP70_1"/>
    <property type="match status" value="1"/>
</dbReference>
<dbReference type="PROSITE" id="PS00329">
    <property type="entry name" value="HSP70_2"/>
    <property type="match status" value="1"/>
</dbReference>
<dbReference type="PROSITE" id="PS01036">
    <property type="entry name" value="HSP70_3"/>
    <property type="match status" value="1"/>
</dbReference>
<feature type="chain" id="PRO_0000078264" description="Heat shock 70 kDa protein 6">
    <location>
        <begin position="1"/>
        <end position="643"/>
    </location>
</feature>
<feature type="region of interest" description="Nucleotide-binding domain (NBD)" evidence="1">
    <location>
        <begin position="3"/>
        <end position="388"/>
    </location>
</feature>
<feature type="region of interest" description="Substrate-binding domain (SBD)" evidence="1">
    <location>
        <begin position="396"/>
        <end position="511"/>
    </location>
</feature>
<feature type="region of interest" description="Disordered" evidence="2">
    <location>
        <begin position="616"/>
        <end position="643"/>
    </location>
</feature>
<feature type="binding site">
    <location>
        <begin position="14"/>
        <end position="17"/>
    </location>
    <ligand>
        <name>ATP</name>
        <dbReference type="ChEBI" id="CHEBI:30616"/>
    </ligand>
</feature>
<feature type="binding site">
    <location>
        <position position="73"/>
    </location>
    <ligand>
        <name>ATP</name>
        <dbReference type="ChEBI" id="CHEBI:30616"/>
    </ligand>
</feature>
<feature type="binding site">
    <location>
        <begin position="204"/>
        <end position="206"/>
    </location>
    <ligand>
        <name>ATP</name>
        <dbReference type="ChEBI" id="CHEBI:30616"/>
    </ligand>
</feature>
<feature type="binding site">
    <location>
        <begin position="270"/>
        <end position="277"/>
    </location>
    <ligand>
        <name>ATP</name>
        <dbReference type="ChEBI" id="CHEBI:30616"/>
    </ligand>
</feature>
<feature type="binding site">
    <location>
        <begin position="341"/>
        <end position="344"/>
    </location>
    <ligand>
        <name>ATP</name>
        <dbReference type="ChEBI" id="CHEBI:30616"/>
    </ligand>
</feature>
<feature type="modified residue" description="N6,N6,N6-trimethyllysine; by METTL21A; in vitro" evidence="3">
    <location>
        <position position="563"/>
    </location>
</feature>
<feature type="sequence variant" id="VAR_060718" description="In dbSNP:rs41297698." evidence="4">
    <original>P</original>
    <variation>T</variation>
    <location>
        <position position="65"/>
    </location>
</feature>
<feature type="sequence variant" id="VAR_060719" description="In dbSNP:rs400835." evidence="4">
    <original>R</original>
    <variation>Q</variation>
    <location>
        <position position="95"/>
    </location>
</feature>
<feature type="sequence variant" id="VAR_049605" description="In dbSNP:rs10919224." evidence="4">
    <original>A</original>
    <variation>T</variation>
    <location>
        <position position="150"/>
    </location>
</feature>
<feature type="sequence variant" id="VAR_049606" description="In dbSNP:rs10919225." evidence="4">
    <original>N</original>
    <variation>S</variation>
    <location>
        <position position="153"/>
    </location>
</feature>
<feature type="sequence variant" id="VAR_049607" description="In dbSNP:rs10919226." evidence="4">
    <original>D</original>
    <variation>N</variation>
    <location>
        <position position="154"/>
    </location>
</feature>
<feature type="sequence variant" id="VAR_060720" description="In dbSNP:rs41297702." evidence="4">
    <original>A</original>
    <variation>V</variation>
    <location>
        <position position="159"/>
    </location>
</feature>
<feature type="sequence variant" id="VAR_049608" description="In dbSNP:rs41297704." evidence="4">
    <original>N</original>
    <variation>K</variation>
    <location>
        <position position="170"/>
    </location>
</feature>
<feature type="sequence variant" id="VAR_049609" description="In dbSNP:rs41297708." evidence="4">
    <original>R</original>
    <variation>P</variation>
    <location>
        <position position="173"/>
    </location>
</feature>
<feature type="sequence variant" id="VAR_049610" description="In dbSNP:rs41297710." evidence="4">
    <original>P</original>
    <variation>A</variation>
    <location>
        <position position="178"/>
    </location>
</feature>
<feature type="sequence variant" id="VAR_049611" description="In dbSNP:rs41297714." evidence="4">
    <original>E</original>
    <variation>K</variation>
    <location>
        <position position="194"/>
    </location>
</feature>
<feature type="sequence variant" id="VAR_024182" description="In dbSNP:rs1079109." evidence="4">
    <original>L</original>
    <variation>F</variation>
    <location>
        <position position="198"/>
    </location>
</feature>
<feature type="sequence variant" id="VAR_049612" description="In dbSNP:rs41299256.">
    <original>R</original>
    <variation>H</variation>
    <location>
        <position position="260"/>
    </location>
</feature>
<feature type="sequence variant" id="VAR_060721" description="In dbSNP:rs41297718." evidence="4">
    <original>T</original>
    <variation>K</variation>
    <location>
        <position position="297"/>
    </location>
</feature>
<feature type="sequence variant" id="VAR_059360" description="In dbSNP:rs417707.">
    <original>V</original>
    <variation>F</variation>
    <location>
        <position position="336"/>
    </location>
</feature>
<feature type="sequence variant" id="VAR_049613" description="In dbSNP:rs388218." evidence="4">
    <original>S</original>
    <variation>I</variation>
    <location>
        <position position="464"/>
    </location>
</feature>
<feature type="sequence variant" id="VAR_049614" description="In dbSNP:rs41299256." evidence="4">
    <original>R</original>
    <variation>H</variation>
    <location>
        <position position="471"/>
    </location>
</feature>
<feature type="sequence variant" id="VAR_049615" description="In dbSNP:rs570189." evidence="4">
    <original>K</original>
    <variation>E</variation>
    <location>
        <position position="528"/>
    </location>
</feature>
<feature type="sequence variant" id="VAR_059361" description="In dbSNP:rs570167.">
    <original>K</original>
    <variation>R</variation>
    <location>
        <position position="528"/>
    </location>
</feature>
<feature type="sequence variant" id="VAR_024183" description="In dbSNP:rs753856." evidence="4">
    <original>D</original>
    <variation>E</variation>
    <location>
        <position position="562"/>
    </location>
</feature>
<feature type="sequence variant" id="VAR_049616" description="In dbSNP:rs452004.">
    <original>M</original>
    <variation>V</variation>
    <location>
        <position position="572"/>
    </location>
</feature>
<feature type="sequence variant" id="VAR_049617" description="In dbSNP:rs368844." evidence="4">
    <original>R</original>
    <variation>Q</variation>
    <location>
        <position position="577"/>
    </location>
</feature>
<feature type="sequence variant" id="VAR_049618" description="In dbSNP:rs41299260." evidence="4">
    <original>T</original>
    <variation>A</variation>
    <location>
        <position position="626"/>
    </location>
</feature>
<feature type="mutagenesis site" description="Complete loss of in vitro methylation by METTL21A." evidence="3">
    <original>K</original>
    <variation>R</variation>
    <location>
        <position position="563"/>
    </location>
</feature>
<feature type="sequence conflict" description="In Ref. 1; CAA36061." evidence="6" ref="1">
    <original>RVC</original>
    <variation>PVS</variation>
    <location>
        <begin position="106"/>
        <end position="108"/>
    </location>
</feature>
<feature type="sequence conflict" description="In Ref. 1; CAA36061." evidence="6" ref="1">
    <original>R</original>
    <variation>G</variation>
    <location>
        <position position="263"/>
    </location>
</feature>
<feature type="strand" evidence="8">
    <location>
        <begin position="9"/>
        <end position="12"/>
    </location>
</feature>
<feature type="strand" evidence="8">
    <location>
        <begin position="15"/>
        <end position="24"/>
    </location>
</feature>
<feature type="strand" evidence="8">
    <location>
        <begin position="27"/>
        <end position="30"/>
    </location>
</feature>
<feature type="strand" evidence="8">
    <location>
        <begin position="38"/>
        <end position="41"/>
    </location>
</feature>
<feature type="strand" evidence="8">
    <location>
        <begin position="44"/>
        <end position="46"/>
    </location>
</feature>
<feature type="strand" evidence="8">
    <location>
        <begin position="51"/>
        <end position="53"/>
    </location>
</feature>
<feature type="helix" evidence="8">
    <location>
        <begin position="55"/>
        <end position="59"/>
    </location>
</feature>
<feature type="turn" evidence="8">
    <location>
        <begin position="60"/>
        <end position="63"/>
    </location>
</feature>
<feature type="helix" evidence="8">
    <location>
        <begin position="65"/>
        <end position="67"/>
    </location>
</feature>
<feature type="helix" evidence="8">
    <location>
        <begin position="72"/>
        <end position="74"/>
    </location>
</feature>
<feature type="turn" evidence="8">
    <location>
        <begin position="75"/>
        <end position="77"/>
    </location>
</feature>
<feature type="helix" evidence="8">
    <location>
        <begin position="83"/>
        <end position="90"/>
    </location>
</feature>
<feature type="strand" evidence="8">
    <location>
        <begin position="93"/>
        <end position="99"/>
    </location>
</feature>
<feature type="strand" evidence="8">
    <location>
        <begin position="102"/>
        <end position="109"/>
    </location>
</feature>
<feature type="strand" evidence="8">
    <location>
        <begin position="112"/>
        <end position="116"/>
    </location>
</feature>
<feature type="helix" evidence="8">
    <location>
        <begin position="118"/>
        <end position="137"/>
    </location>
</feature>
<feature type="strand" evidence="8">
    <location>
        <begin position="143"/>
        <end position="148"/>
    </location>
</feature>
<feature type="helix" evidence="8">
    <location>
        <begin position="154"/>
        <end position="166"/>
    </location>
</feature>
<feature type="strand" evidence="8">
    <location>
        <begin position="170"/>
        <end position="176"/>
    </location>
</feature>
<feature type="helix" evidence="8">
    <location>
        <begin position="177"/>
        <end position="184"/>
    </location>
</feature>
<feature type="turn" evidence="8">
    <location>
        <begin position="185"/>
        <end position="188"/>
    </location>
</feature>
<feature type="strand" evidence="8">
    <location>
        <begin position="195"/>
        <end position="202"/>
    </location>
</feature>
<feature type="strand" evidence="8">
    <location>
        <begin position="207"/>
        <end position="215"/>
    </location>
</feature>
<feature type="strand" evidence="8">
    <location>
        <begin position="218"/>
        <end position="227"/>
    </location>
</feature>
<feature type="helix" evidence="8">
    <location>
        <begin position="232"/>
        <end position="251"/>
    </location>
</feature>
<feature type="helix" evidence="8">
    <location>
        <begin position="259"/>
        <end position="275"/>
    </location>
</feature>
<feature type="turn" evidence="8">
    <location>
        <begin position="276"/>
        <end position="278"/>
    </location>
</feature>
<feature type="strand" evidence="8">
    <location>
        <begin position="280"/>
        <end position="290"/>
    </location>
</feature>
<feature type="strand" evidence="8">
    <location>
        <begin position="293"/>
        <end position="300"/>
    </location>
</feature>
<feature type="helix" evidence="8">
    <location>
        <begin position="301"/>
        <end position="314"/>
    </location>
</feature>
<feature type="helix" evidence="8">
    <location>
        <begin position="316"/>
        <end position="326"/>
    </location>
</feature>
<feature type="helix" evidence="8">
    <location>
        <begin position="330"/>
        <end position="332"/>
    </location>
</feature>
<feature type="strand" evidence="8">
    <location>
        <begin position="334"/>
        <end position="340"/>
    </location>
</feature>
<feature type="helix" evidence="8">
    <location>
        <begin position="341"/>
        <end position="344"/>
    </location>
</feature>
<feature type="helix" evidence="8">
    <location>
        <begin position="346"/>
        <end position="355"/>
    </location>
</feature>
<feature type="turn" evidence="8">
    <location>
        <begin position="356"/>
        <end position="358"/>
    </location>
</feature>
<feature type="turn" evidence="8">
    <location>
        <begin position="367"/>
        <end position="369"/>
    </location>
</feature>
<feature type="helix" evidence="8">
    <location>
        <begin position="370"/>
        <end position="383"/>
    </location>
</feature>
<accession>P17066</accession>
<accession>Q1HBA8</accession>
<accession>Q8IYK7</accession>
<accession>Q9BT95</accession>